<name>RS11_MYCSP</name>
<proteinExistence type="inferred from homology"/>
<dbReference type="EMBL" id="L09636">
    <property type="protein sequence ID" value="AAA61683.1"/>
    <property type="molecule type" value="Genomic_DNA"/>
</dbReference>
<dbReference type="SMR" id="Q46451"/>
<dbReference type="GO" id="GO:1990904">
    <property type="term" value="C:ribonucleoprotein complex"/>
    <property type="evidence" value="ECO:0007669"/>
    <property type="project" value="UniProtKB-KW"/>
</dbReference>
<dbReference type="GO" id="GO:0005840">
    <property type="term" value="C:ribosome"/>
    <property type="evidence" value="ECO:0007669"/>
    <property type="project" value="UniProtKB-KW"/>
</dbReference>
<dbReference type="GO" id="GO:0019843">
    <property type="term" value="F:rRNA binding"/>
    <property type="evidence" value="ECO:0007669"/>
    <property type="project" value="UniProtKB-UniRule"/>
</dbReference>
<dbReference type="GO" id="GO:0003735">
    <property type="term" value="F:structural constituent of ribosome"/>
    <property type="evidence" value="ECO:0007669"/>
    <property type="project" value="InterPro"/>
</dbReference>
<dbReference type="GO" id="GO:0006412">
    <property type="term" value="P:translation"/>
    <property type="evidence" value="ECO:0007669"/>
    <property type="project" value="UniProtKB-UniRule"/>
</dbReference>
<dbReference type="Gene3D" id="3.30.420.80">
    <property type="entry name" value="Ribosomal protein S11"/>
    <property type="match status" value="1"/>
</dbReference>
<dbReference type="HAMAP" id="MF_01310">
    <property type="entry name" value="Ribosomal_uS11"/>
    <property type="match status" value="1"/>
</dbReference>
<dbReference type="InterPro" id="IPR001971">
    <property type="entry name" value="Ribosomal_uS11"/>
</dbReference>
<dbReference type="InterPro" id="IPR019981">
    <property type="entry name" value="Ribosomal_uS11_bac-type"/>
</dbReference>
<dbReference type="InterPro" id="IPR018102">
    <property type="entry name" value="Ribosomal_uS11_CS"/>
</dbReference>
<dbReference type="InterPro" id="IPR036967">
    <property type="entry name" value="Ribosomal_uS11_sf"/>
</dbReference>
<dbReference type="NCBIfam" id="NF003698">
    <property type="entry name" value="PRK05309.1"/>
    <property type="match status" value="1"/>
</dbReference>
<dbReference type="NCBIfam" id="TIGR03632">
    <property type="entry name" value="uS11_bact"/>
    <property type="match status" value="1"/>
</dbReference>
<dbReference type="PANTHER" id="PTHR11759">
    <property type="entry name" value="40S RIBOSOMAL PROTEIN S14/30S RIBOSOMAL PROTEIN S11"/>
    <property type="match status" value="1"/>
</dbReference>
<dbReference type="Pfam" id="PF00411">
    <property type="entry name" value="Ribosomal_S11"/>
    <property type="match status" value="1"/>
</dbReference>
<dbReference type="PIRSF" id="PIRSF002131">
    <property type="entry name" value="Ribosomal_S11"/>
    <property type="match status" value="1"/>
</dbReference>
<dbReference type="SUPFAM" id="SSF53137">
    <property type="entry name" value="Translational machinery components"/>
    <property type="match status" value="1"/>
</dbReference>
<dbReference type="PROSITE" id="PS00054">
    <property type="entry name" value="RIBOSOMAL_S11"/>
    <property type="match status" value="1"/>
</dbReference>
<protein>
    <recommendedName>
        <fullName evidence="1">Small ribosomal subunit protein uS11</fullName>
    </recommendedName>
    <alternativeName>
        <fullName evidence="3">30S ribosomal protein S11</fullName>
    </alternativeName>
</protein>
<evidence type="ECO:0000255" key="1">
    <source>
        <dbReference type="HAMAP-Rule" id="MF_01310"/>
    </source>
</evidence>
<evidence type="ECO:0000256" key="2">
    <source>
        <dbReference type="SAM" id="MobiDB-lite"/>
    </source>
</evidence>
<evidence type="ECO:0000305" key="3"/>
<evidence type="ECO:0000305" key="4">
    <source>
    </source>
</evidence>
<sequence>MAKKNKKVVTQGIAHIHSTYQNTIVSFSDLKGNVFAWSSSGAIGYKGTKKKTPYAAGLAAAAAVEKAKEFGLKEVSILVKGVGPGKSTARKQIETSGFTIKDVKDVTPTPHNGTRPPKKILKREK</sequence>
<keyword id="KW-0687">Ribonucleoprotein</keyword>
<keyword id="KW-0689">Ribosomal protein</keyword>
<keyword id="KW-0694">RNA-binding</keyword>
<keyword id="KW-0699">rRNA-binding</keyword>
<gene>
    <name evidence="1" type="primary">rpsK</name>
</gene>
<reference key="1">
    <citation type="journal article" date="1993" name="J. Bacteriol.">
        <title>Cloning and characterization of the RNA polymerase alpha-subunit operon of Chlamydia trachomatis.</title>
        <authorList>
            <person name="Tan M."/>
            <person name="Klein R."/>
            <person name="Grant R."/>
            <person name="Ganem D."/>
            <person name="Engel J.N."/>
        </authorList>
    </citation>
    <scope>NUCLEOTIDE SEQUENCE [GENOMIC DNA]</scope>
</reference>
<reference key="2">
    <citation type="journal article" date="1995" name="J. Bacteriol.">
        <authorList>
            <person name="Tan M."/>
            <person name="Klein R."/>
            <person name="Grant R."/>
            <person name="Ganem D."/>
            <person name="Engel J.N."/>
        </authorList>
    </citation>
    <scope>ERRATUM OF PUBMED:8226662</scope>
    <scope>CORRECTION OF SPECIES OF ORIGIN</scope>
</reference>
<accession>Q46451</accession>
<organism>
    <name type="scientific">Mycoplasma sp</name>
    <dbReference type="NCBI Taxonomy" id="2108"/>
    <lineage>
        <taxon>Bacteria</taxon>
        <taxon>Bacillati</taxon>
        <taxon>Mycoplasmatota</taxon>
        <taxon>Mollicutes</taxon>
        <taxon>Mycoplasmataceae</taxon>
        <taxon>Mycoplasma</taxon>
    </lineage>
</organism>
<feature type="chain" id="PRO_0000123184" description="Small ribosomal subunit protein uS11">
    <location>
        <begin position="1"/>
        <end position="125"/>
    </location>
</feature>
<feature type="region of interest" description="Disordered" evidence="2">
    <location>
        <begin position="101"/>
        <end position="125"/>
    </location>
</feature>
<feature type="compositionally biased region" description="Basic residues" evidence="2">
    <location>
        <begin position="116"/>
        <end position="125"/>
    </location>
</feature>
<comment type="function">
    <text evidence="1">Located on the platform of the 30S subunit, it bridges several disparate RNA helices of the 16S rRNA. Forms part of the Shine-Dalgarno cleft in the 70S ribosome.</text>
</comment>
<comment type="subunit">
    <text evidence="1">Part of the 30S ribosomal subunit. Interacts with proteins S7 and S18. Binds to IF-3.</text>
</comment>
<comment type="similarity">
    <text evidence="1">Belongs to the universal ribosomal protein uS11 family.</text>
</comment>
<comment type="caution">
    <text evidence="4">Was originally thought to originate from Chlamydia trachomatis.</text>
</comment>